<feature type="chain" id="PRO_0000237911" description="Shikimate kinase">
    <location>
        <begin position="1"/>
        <end position="172"/>
    </location>
</feature>
<feature type="binding site" evidence="1">
    <location>
        <begin position="14"/>
        <end position="19"/>
    </location>
    <ligand>
        <name>ATP</name>
        <dbReference type="ChEBI" id="CHEBI:30616"/>
    </ligand>
</feature>
<feature type="binding site" evidence="1">
    <location>
        <position position="18"/>
    </location>
    <ligand>
        <name>Mg(2+)</name>
        <dbReference type="ChEBI" id="CHEBI:18420"/>
    </ligand>
</feature>
<feature type="binding site" evidence="1">
    <location>
        <position position="36"/>
    </location>
    <ligand>
        <name>substrate</name>
    </ligand>
</feature>
<feature type="binding site" evidence="1">
    <location>
        <position position="60"/>
    </location>
    <ligand>
        <name>substrate</name>
    </ligand>
</feature>
<feature type="binding site" evidence="1">
    <location>
        <position position="82"/>
    </location>
    <ligand>
        <name>substrate</name>
    </ligand>
</feature>
<feature type="binding site" evidence="1">
    <location>
        <position position="120"/>
    </location>
    <ligand>
        <name>ATP</name>
        <dbReference type="ChEBI" id="CHEBI:30616"/>
    </ligand>
</feature>
<feature type="binding site" evidence="1">
    <location>
        <position position="140"/>
    </location>
    <ligand>
        <name>substrate</name>
    </ligand>
</feature>
<feature type="binding site" evidence="1">
    <location>
        <position position="157"/>
    </location>
    <ligand>
        <name>ATP</name>
        <dbReference type="ChEBI" id="CHEBI:30616"/>
    </ligand>
</feature>
<accession>Q3IJC5</accession>
<dbReference type="EC" id="2.7.1.71" evidence="1"/>
<dbReference type="EMBL" id="CR954246">
    <property type="protein sequence ID" value="CAI87763.1"/>
    <property type="status" value="ALT_INIT"/>
    <property type="molecule type" value="Genomic_DNA"/>
</dbReference>
<dbReference type="SMR" id="Q3IJC5"/>
<dbReference type="STRING" id="326442.PSHAa2715"/>
<dbReference type="KEGG" id="pha:PSHAa2715"/>
<dbReference type="eggNOG" id="COG0703">
    <property type="taxonomic scope" value="Bacteria"/>
</dbReference>
<dbReference type="HOGENOM" id="CLU_057607_2_2_6"/>
<dbReference type="BioCyc" id="PHAL326442:PSHA_RS13360-MONOMER"/>
<dbReference type="UniPathway" id="UPA00053">
    <property type="reaction ID" value="UER00088"/>
</dbReference>
<dbReference type="Proteomes" id="UP000006843">
    <property type="component" value="Chromosome I"/>
</dbReference>
<dbReference type="GO" id="GO:0005829">
    <property type="term" value="C:cytosol"/>
    <property type="evidence" value="ECO:0007669"/>
    <property type="project" value="TreeGrafter"/>
</dbReference>
<dbReference type="GO" id="GO:0005524">
    <property type="term" value="F:ATP binding"/>
    <property type="evidence" value="ECO:0007669"/>
    <property type="project" value="UniProtKB-UniRule"/>
</dbReference>
<dbReference type="GO" id="GO:0000287">
    <property type="term" value="F:magnesium ion binding"/>
    <property type="evidence" value="ECO:0007669"/>
    <property type="project" value="UniProtKB-UniRule"/>
</dbReference>
<dbReference type="GO" id="GO:0004765">
    <property type="term" value="F:shikimate kinase activity"/>
    <property type="evidence" value="ECO:0007669"/>
    <property type="project" value="UniProtKB-UniRule"/>
</dbReference>
<dbReference type="GO" id="GO:0008652">
    <property type="term" value="P:amino acid biosynthetic process"/>
    <property type="evidence" value="ECO:0007669"/>
    <property type="project" value="UniProtKB-KW"/>
</dbReference>
<dbReference type="GO" id="GO:0009073">
    <property type="term" value="P:aromatic amino acid family biosynthetic process"/>
    <property type="evidence" value="ECO:0007669"/>
    <property type="project" value="UniProtKB-KW"/>
</dbReference>
<dbReference type="GO" id="GO:0009423">
    <property type="term" value="P:chorismate biosynthetic process"/>
    <property type="evidence" value="ECO:0007669"/>
    <property type="project" value="UniProtKB-UniRule"/>
</dbReference>
<dbReference type="CDD" id="cd00464">
    <property type="entry name" value="SK"/>
    <property type="match status" value="1"/>
</dbReference>
<dbReference type="FunFam" id="3.40.50.300:FF:000099">
    <property type="entry name" value="Shikimate kinase 1"/>
    <property type="match status" value="1"/>
</dbReference>
<dbReference type="Gene3D" id="3.40.50.300">
    <property type="entry name" value="P-loop containing nucleotide triphosphate hydrolases"/>
    <property type="match status" value="1"/>
</dbReference>
<dbReference type="HAMAP" id="MF_00109">
    <property type="entry name" value="Shikimate_kinase"/>
    <property type="match status" value="1"/>
</dbReference>
<dbReference type="InterPro" id="IPR027417">
    <property type="entry name" value="P-loop_NTPase"/>
</dbReference>
<dbReference type="InterPro" id="IPR031322">
    <property type="entry name" value="Shikimate/glucono_kinase"/>
</dbReference>
<dbReference type="InterPro" id="IPR000623">
    <property type="entry name" value="Shikimate_kinase/TSH1"/>
</dbReference>
<dbReference type="InterPro" id="IPR023000">
    <property type="entry name" value="Shikimate_kinase_CS"/>
</dbReference>
<dbReference type="NCBIfam" id="NF003456">
    <property type="entry name" value="PRK05057.1"/>
    <property type="match status" value="1"/>
</dbReference>
<dbReference type="PANTHER" id="PTHR21087">
    <property type="entry name" value="SHIKIMATE KINASE"/>
    <property type="match status" value="1"/>
</dbReference>
<dbReference type="PANTHER" id="PTHR21087:SF16">
    <property type="entry name" value="SHIKIMATE KINASE 1, CHLOROPLASTIC"/>
    <property type="match status" value="1"/>
</dbReference>
<dbReference type="Pfam" id="PF01202">
    <property type="entry name" value="SKI"/>
    <property type="match status" value="1"/>
</dbReference>
<dbReference type="PRINTS" id="PR01100">
    <property type="entry name" value="SHIKIMTKNASE"/>
</dbReference>
<dbReference type="SUPFAM" id="SSF52540">
    <property type="entry name" value="P-loop containing nucleoside triphosphate hydrolases"/>
    <property type="match status" value="1"/>
</dbReference>
<dbReference type="PROSITE" id="PS01128">
    <property type="entry name" value="SHIKIMATE_KINASE"/>
    <property type="match status" value="1"/>
</dbReference>
<organism>
    <name type="scientific">Pseudoalteromonas translucida (strain TAC 125)</name>
    <dbReference type="NCBI Taxonomy" id="326442"/>
    <lineage>
        <taxon>Bacteria</taxon>
        <taxon>Pseudomonadati</taxon>
        <taxon>Pseudomonadota</taxon>
        <taxon>Gammaproteobacteria</taxon>
        <taxon>Alteromonadales</taxon>
        <taxon>Pseudoalteromonadaceae</taxon>
        <taxon>Pseudoalteromonas</taxon>
    </lineage>
</organism>
<proteinExistence type="inferred from homology"/>
<name>AROK_PSET1</name>
<comment type="function">
    <text evidence="1">Catalyzes the specific phosphorylation of the 3-hydroxyl group of shikimic acid using ATP as a cosubstrate.</text>
</comment>
<comment type="catalytic activity">
    <reaction evidence="1">
        <text>shikimate + ATP = 3-phosphoshikimate + ADP + H(+)</text>
        <dbReference type="Rhea" id="RHEA:13121"/>
        <dbReference type="ChEBI" id="CHEBI:15378"/>
        <dbReference type="ChEBI" id="CHEBI:30616"/>
        <dbReference type="ChEBI" id="CHEBI:36208"/>
        <dbReference type="ChEBI" id="CHEBI:145989"/>
        <dbReference type="ChEBI" id="CHEBI:456216"/>
        <dbReference type="EC" id="2.7.1.71"/>
    </reaction>
</comment>
<comment type="cofactor">
    <cofactor evidence="1">
        <name>Mg(2+)</name>
        <dbReference type="ChEBI" id="CHEBI:18420"/>
    </cofactor>
    <text evidence="1">Binds 1 Mg(2+) ion per subunit.</text>
</comment>
<comment type="pathway">
    <text evidence="1">Metabolic intermediate biosynthesis; chorismate biosynthesis; chorismate from D-erythrose 4-phosphate and phosphoenolpyruvate: step 5/7.</text>
</comment>
<comment type="subunit">
    <text evidence="1">Monomer.</text>
</comment>
<comment type="subcellular location">
    <subcellularLocation>
        <location evidence="1">Cytoplasm</location>
    </subcellularLocation>
</comment>
<comment type="similarity">
    <text evidence="1">Belongs to the shikimate kinase family.</text>
</comment>
<comment type="sequence caution" evidence="2">
    <conflict type="erroneous initiation">
        <sequence resource="EMBL-CDS" id="CAI87763"/>
    </conflict>
</comment>
<protein>
    <recommendedName>
        <fullName evidence="1">Shikimate kinase</fullName>
        <shortName evidence="1">SK</shortName>
        <ecNumber evidence="1">2.7.1.71</ecNumber>
    </recommendedName>
</protein>
<evidence type="ECO:0000255" key="1">
    <source>
        <dbReference type="HAMAP-Rule" id="MF_00109"/>
    </source>
</evidence>
<evidence type="ECO:0000305" key="2"/>
<gene>
    <name evidence="1" type="primary">aroK</name>
    <name type="ordered locus">PSHAa2715</name>
</gene>
<sequence length="172" mass="19437">MAEKRNIFLVGPMGAGKSTIGRHIADQLHLEFVDSDQEIERRTGADIAWVFDLEGEEGFRLREESVIGDLTEMQGIVLATGGGSVMSKEVRNKLSARGIVVYLETPIEKQVARTQRDKRRPLLQTEEAPRDVLERLAEEREPLYKEVADFVVRTDEQSAKVVANQIIEKLDF</sequence>
<reference key="1">
    <citation type="journal article" date="2005" name="Genome Res.">
        <title>Coping with cold: the genome of the versatile marine Antarctica bacterium Pseudoalteromonas haloplanktis TAC125.</title>
        <authorList>
            <person name="Medigue C."/>
            <person name="Krin E."/>
            <person name="Pascal G."/>
            <person name="Barbe V."/>
            <person name="Bernsel A."/>
            <person name="Bertin P.N."/>
            <person name="Cheung F."/>
            <person name="Cruveiller S."/>
            <person name="D'Amico S."/>
            <person name="Duilio A."/>
            <person name="Fang G."/>
            <person name="Feller G."/>
            <person name="Ho C."/>
            <person name="Mangenot S."/>
            <person name="Marino G."/>
            <person name="Nilsson J."/>
            <person name="Parrilli E."/>
            <person name="Rocha E.P.C."/>
            <person name="Rouy Z."/>
            <person name="Sekowska A."/>
            <person name="Tutino M.L."/>
            <person name="Vallenet D."/>
            <person name="von Heijne G."/>
            <person name="Danchin A."/>
        </authorList>
    </citation>
    <scope>NUCLEOTIDE SEQUENCE [LARGE SCALE GENOMIC DNA]</scope>
    <source>
        <strain>TAC 125</strain>
    </source>
</reference>
<keyword id="KW-0028">Amino-acid biosynthesis</keyword>
<keyword id="KW-0057">Aromatic amino acid biosynthesis</keyword>
<keyword id="KW-0067">ATP-binding</keyword>
<keyword id="KW-0963">Cytoplasm</keyword>
<keyword id="KW-0418">Kinase</keyword>
<keyword id="KW-0460">Magnesium</keyword>
<keyword id="KW-0479">Metal-binding</keyword>
<keyword id="KW-0547">Nucleotide-binding</keyword>
<keyword id="KW-1185">Reference proteome</keyword>
<keyword id="KW-0808">Transferase</keyword>